<evidence type="ECO:0000255" key="1">
    <source>
        <dbReference type="HAMAP-Rule" id="MF_00055"/>
    </source>
</evidence>
<name>Y045_METTH</name>
<gene>
    <name type="ordered locus">MTH_45</name>
</gene>
<accession>O26151</accession>
<dbReference type="EMBL" id="AE000666">
    <property type="protein sequence ID" value="AAB84552.1"/>
    <property type="molecule type" value="Genomic_DNA"/>
</dbReference>
<dbReference type="PIR" id="G69158">
    <property type="entry name" value="G69158"/>
</dbReference>
<dbReference type="RefSeq" id="WP_010875685.1">
    <property type="nucleotide sequence ID" value="NC_000916.1"/>
</dbReference>
<dbReference type="SMR" id="O26151"/>
<dbReference type="FunCoup" id="O26151">
    <property type="interactions" value="98"/>
</dbReference>
<dbReference type="STRING" id="187420.MTH_45"/>
<dbReference type="PaxDb" id="187420-MTH_45"/>
<dbReference type="EnsemblBacteria" id="AAB84552">
    <property type="protein sequence ID" value="AAB84552"/>
    <property type="gene ID" value="MTH_45"/>
</dbReference>
<dbReference type="GeneID" id="1470007"/>
<dbReference type="KEGG" id="mth:MTH_45"/>
<dbReference type="PATRIC" id="fig|187420.15.peg.43"/>
<dbReference type="HOGENOM" id="CLU_038085_2_0_2"/>
<dbReference type="InParanoid" id="O26151"/>
<dbReference type="Proteomes" id="UP000005223">
    <property type="component" value="Chromosome"/>
</dbReference>
<dbReference type="CDD" id="cd07361">
    <property type="entry name" value="MEMO_like"/>
    <property type="match status" value="1"/>
</dbReference>
<dbReference type="Gene3D" id="3.40.830.10">
    <property type="entry name" value="LigB-like"/>
    <property type="match status" value="1"/>
</dbReference>
<dbReference type="HAMAP" id="MF_00055">
    <property type="entry name" value="MEMO1"/>
    <property type="match status" value="1"/>
</dbReference>
<dbReference type="InterPro" id="IPR002737">
    <property type="entry name" value="MEMO1_fam"/>
</dbReference>
<dbReference type="NCBIfam" id="TIGR04336">
    <property type="entry name" value="AmmeMemoSam_B"/>
    <property type="match status" value="1"/>
</dbReference>
<dbReference type="NCBIfam" id="NF001987">
    <property type="entry name" value="PRK00782.1"/>
    <property type="match status" value="1"/>
</dbReference>
<dbReference type="PANTHER" id="PTHR11060">
    <property type="entry name" value="PROTEIN MEMO1"/>
    <property type="match status" value="1"/>
</dbReference>
<dbReference type="PANTHER" id="PTHR11060:SF0">
    <property type="entry name" value="PROTEIN MEMO1"/>
    <property type="match status" value="1"/>
</dbReference>
<dbReference type="Pfam" id="PF01875">
    <property type="entry name" value="Memo"/>
    <property type="match status" value="1"/>
</dbReference>
<dbReference type="SUPFAM" id="SSF53213">
    <property type="entry name" value="LigB-like"/>
    <property type="match status" value="1"/>
</dbReference>
<proteinExistence type="inferred from homology"/>
<comment type="similarity">
    <text evidence="1">Belongs to the MEMO1 family.</text>
</comment>
<feature type="chain" id="PRO_0000134383" description="MEMO1 family protein MTH_45">
    <location>
        <begin position="1"/>
        <end position="277"/>
    </location>
</feature>
<protein>
    <recommendedName>
        <fullName evidence="1">MEMO1 family protein MTH_45</fullName>
    </recommendedName>
</protein>
<organism>
    <name type="scientific">Methanothermobacter thermautotrophicus (strain ATCC 29096 / DSM 1053 / JCM 10044 / NBRC 100330 / Delta H)</name>
    <name type="common">Methanobacterium thermoautotrophicum</name>
    <dbReference type="NCBI Taxonomy" id="187420"/>
    <lineage>
        <taxon>Archaea</taxon>
        <taxon>Methanobacteriati</taxon>
        <taxon>Methanobacteriota</taxon>
        <taxon>Methanomada group</taxon>
        <taxon>Methanobacteria</taxon>
        <taxon>Methanobacteriales</taxon>
        <taxon>Methanobacteriaceae</taxon>
        <taxon>Methanothermobacter</taxon>
    </lineage>
</organism>
<keyword id="KW-1185">Reference proteome</keyword>
<sequence length="277" mass="29815">MIRRPAVAGAFYERDPAALRRRIEWCFEHELGPGTLPAVGSMRRIKGVIAPHAGYMYSGPVAAHAYHELVSDGIPGTLVIICPNHTGMGSGVSLMQQGAWETPLGTVEIDSELAEAIVRESGIIDLDETAHLAEHSCEVHVPFIQYFTDNFRIVPVTMWMQGHETAADVGHAVASAIRETGRDAAVIASTDFTHYSPQDIAEATDRRIIDRITAMDDTGMYGVISELNATMCGYGPVAATIIASRILGATECDLLRYATSGDVTGDRSSVVGYAHLS</sequence>
<reference key="1">
    <citation type="journal article" date="1997" name="J. Bacteriol.">
        <title>Complete genome sequence of Methanobacterium thermoautotrophicum deltaH: functional analysis and comparative genomics.</title>
        <authorList>
            <person name="Smith D.R."/>
            <person name="Doucette-Stamm L.A."/>
            <person name="Deloughery C."/>
            <person name="Lee H.-M."/>
            <person name="Dubois J."/>
            <person name="Aldredge T."/>
            <person name="Bashirzadeh R."/>
            <person name="Blakely D."/>
            <person name="Cook R."/>
            <person name="Gilbert K."/>
            <person name="Harrison D."/>
            <person name="Hoang L."/>
            <person name="Keagle P."/>
            <person name="Lumm W."/>
            <person name="Pothier B."/>
            <person name="Qiu D."/>
            <person name="Spadafora R."/>
            <person name="Vicare R."/>
            <person name="Wang Y."/>
            <person name="Wierzbowski J."/>
            <person name="Gibson R."/>
            <person name="Jiwani N."/>
            <person name="Caruso A."/>
            <person name="Bush D."/>
            <person name="Safer H."/>
            <person name="Patwell D."/>
            <person name="Prabhakar S."/>
            <person name="McDougall S."/>
            <person name="Shimer G."/>
            <person name="Goyal A."/>
            <person name="Pietrovski S."/>
            <person name="Church G.M."/>
            <person name="Daniels C.J."/>
            <person name="Mao J.-I."/>
            <person name="Rice P."/>
            <person name="Noelling J."/>
            <person name="Reeve J.N."/>
        </authorList>
    </citation>
    <scope>NUCLEOTIDE SEQUENCE [LARGE SCALE GENOMIC DNA]</scope>
    <source>
        <strain>ATCC 29096 / DSM 1053 / JCM 10044 / NBRC 100330 / Delta H</strain>
    </source>
</reference>